<dbReference type="EMBL" id="AB076978">
    <property type="protein sequence ID" value="BAD06454.1"/>
    <property type="molecule type" value="mRNA"/>
</dbReference>
<dbReference type="CCDS" id="CCDS42976.1"/>
<dbReference type="RefSeq" id="NP_001032903.1">
    <property type="nucleotide sequence ID" value="NM_001037814.1"/>
</dbReference>
<dbReference type="SMR" id="Q2WGN9"/>
<dbReference type="BioGRID" id="126176">
    <property type="interactions" value="1"/>
</dbReference>
<dbReference type="FunCoup" id="Q2WGN9">
    <property type="interactions" value="30"/>
</dbReference>
<dbReference type="STRING" id="9606.ENSP00000383431"/>
<dbReference type="GlyGen" id="Q2WGN9">
    <property type="glycosylation" value="3 sites, 1 N-linked glycan (1 site), 1 O-linked glycan (1 site)"/>
</dbReference>
<dbReference type="iPTMnet" id="Q2WGN9"/>
<dbReference type="PhosphoSitePlus" id="Q2WGN9"/>
<dbReference type="BioMuta" id="GAB4"/>
<dbReference type="DMDM" id="121947654"/>
<dbReference type="MassIVE" id="Q2WGN9"/>
<dbReference type="PaxDb" id="9606-ENSP00000383431"/>
<dbReference type="PeptideAtlas" id="Q2WGN9"/>
<dbReference type="ProteomicsDB" id="61538"/>
<dbReference type="Antibodypedia" id="50150">
    <property type="antibodies" value="130 antibodies from 21 providers"/>
</dbReference>
<dbReference type="DNASU" id="128954"/>
<dbReference type="Ensembl" id="ENST00000400588.5">
    <property type="protein sequence ID" value="ENSP00000383431.1"/>
    <property type="gene ID" value="ENSG00000215568.9"/>
</dbReference>
<dbReference type="GeneID" id="128954"/>
<dbReference type="KEGG" id="hsa:128954"/>
<dbReference type="MANE-Select" id="ENST00000400588.5">
    <property type="protein sequence ID" value="ENSP00000383431.1"/>
    <property type="RefSeq nucleotide sequence ID" value="NM_001037814.1"/>
    <property type="RefSeq protein sequence ID" value="NP_001032903.1"/>
</dbReference>
<dbReference type="UCSC" id="uc002zlw.4">
    <property type="organism name" value="human"/>
</dbReference>
<dbReference type="AGR" id="HGNC:18325"/>
<dbReference type="CTD" id="128954"/>
<dbReference type="DisGeNET" id="128954"/>
<dbReference type="GeneCards" id="GAB4"/>
<dbReference type="HGNC" id="HGNC:18325">
    <property type="gene designation" value="GAB4"/>
</dbReference>
<dbReference type="HPA" id="ENSG00000215568">
    <property type="expression patterns" value="Tissue enriched (testis)"/>
</dbReference>
<dbReference type="neXtProt" id="NX_Q2WGN9"/>
<dbReference type="PharmGKB" id="PA134933290"/>
<dbReference type="VEuPathDB" id="HostDB:ENSG00000215568"/>
<dbReference type="eggNOG" id="KOG3751">
    <property type="taxonomic scope" value="Eukaryota"/>
</dbReference>
<dbReference type="GeneTree" id="ENSGT00940000164938"/>
<dbReference type="HOGENOM" id="CLU_028652_0_0_1"/>
<dbReference type="InParanoid" id="Q2WGN9"/>
<dbReference type="OrthoDB" id="67516at2759"/>
<dbReference type="PAN-GO" id="Q2WGN9">
    <property type="GO annotations" value="3 GO annotations based on evolutionary models"/>
</dbReference>
<dbReference type="PhylomeDB" id="Q2WGN9"/>
<dbReference type="TreeFam" id="TF329487"/>
<dbReference type="SignaLink" id="Q2WGN9"/>
<dbReference type="BioGRID-ORCS" id="128954">
    <property type="hits" value="21 hits in 1140 CRISPR screens"/>
</dbReference>
<dbReference type="ChiTaRS" id="GAB4">
    <property type="organism name" value="human"/>
</dbReference>
<dbReference type="GenomeRNAi" id="128954"/>
<dbReference type="Pharos" id="Q2WGN9">
    <property type="development level" value="Tdark"/>
</dbReference>
<dbReference type="PRO" id="PR:Q2WGN9"/>
<dbReference type="Proteomes" id="UP000005640">
    <property type="component" value="Chromosome 22"/>
</dbReference>
<dbReference type="RNAct" id="Q2WGN9">
    <property type="molecule type" value="protein"/>
</dbReference>
<dbReference type="Bgee" id="ENSG00000215568">
    <property type="expression patterns" value="Expressed in male germ line stem cell (sensu Vertebrata) in testis and 45 other cell types or tissues"/>
</dbReference>
<dbReference type="ExpressionAtlas" id="Q2WGN9">
    <property type="expression patterns" value="baseline and differential"/>
</dbReference>
<dbReference type="GO" id="GO:0005737">
    <property type="term" value="C:cytoplasm"/>
    <property type="evidence" value="ECO:0000318"/>
    <property type="project" value="GO_Central"/>
</dbReference>
<dbReference type="GO" id="GO:0005068">
    <property type="term" value="F:transmembrane receptor protein tyrosine kinase adaptor activity"/>
    <property type="evidence" value="ECO:0000318"/>
    <property type="project" value="GO_Central"/>
</dbReference>
<dbReference type="GO" id="GO:0007165">
    <property type="term" value="P:signal transduction"/>
    <property type="evidence" value="ECO:0000318"/>
    <property type="project" value="GO_Central"/>
</dbReference>
<dbReference type="Gene3D" id="2.30.29.30">
    <property type="entry name" value="Pleckstrin-homology domain (PH domain)/Phosphotyrosine-binding domain (PTB)"/>
    <property type="match status" value="1"/>
</dbReference>
<dbReference type="InterPro" id="IPR046355">
    <property type="entry name" value="Gab1-4-like"/>
</dbReference>
<dbReference type="InterPro" id="IPR011993">
    <property type="entry name" value="PH-like_dom_sf"/>
</dbReference>
<dbReference type="InterPro" id="IPR001849">
    <property type="entry name" value="PH_domain"/>
</dbReference>
<dbReference type="PANTHER" id="PTHR45960">
    <property type="entry name" value="GRB2-ASSOCIATED-BINDING PROTEIN"/>
    <property type="match status" value="1"/>
</dbReference>
<dbReference type="PANTHER" id="PTHR45960:SF4">
    <property type="entry name" value="GRB2-ASSOCIATED-BINDING PROTEIN 4"/>
    <property type="match status" value="1"/>
</dbReference>
<dbReference type="Pfam" id="PF00169">
    <property type="entry name" value="PH"/>
    <property type="match status" value="1"/>
</dbReference>
<dbReference type="SMART" id="SM00233">
    <property type="entry name" value="PH"/>
    <property type="match status" value="1"/>
</dbReference>
<dbReference type="SUPFAM" id="SSF50729">
    <property type="entry name" value="PH domain-like"/>
    <property type="match status" value="1"/>
</dbReference>
<dbReference type="PROSITE" id="PS50003">
    <property type="entry name" value="PH_DOMAIN"/>
    <property type="match status" value="1"/>
</dbReference>
<organism>
    <name type="scientific">Homo sapiens</name>
    <name type="common">Human</name>
    <dbReference type="NCBI Taxonomy" id="9606"/>
    <lineage>
        <taxon>Eukaryota</taxon>
        <taxon>Metazoa</taxon>
        <taxon>Chordata</taxon>
        <taxon>Craniata</taxon>
        <taxon>Vertebrata</taxon>
        <taxon>Euteleostomi</taxon>
        <taxon>Mammalia</taxon>
        <taxon>Eutheria</taxon>
        <taxon>Euarchontoglires</taxon>
        <taxon>Primates</taxon>
        <taxon>Haplorrhini</taxon>
        <taxon>Catarrhini</taxon>
        <taxon>Hominidae</taxon>
        <taxon>Homo</taxon>
    </lineage>
</organism>
<proteinExistence type="evidence at transcript level"/>
<gene>
    <name type="primary">GAB4</name>
</gene>
<keyword id="KW-1185">Reference proteome</keyword>
<name>GAB4_HUMAN</name>
<protein>
    <recommendedName>
        <fullName>GRB2-associated-binding protein 4</fullName>
    </recommendedName>
    <alternativeName>
        <fullName>GRB2-associated binder 2-like</fullName>
        <shortName>GAB2-like</shortName>
    </alternativeName>
    <alternativeName>
        <fullName>GRB2-associated binder 4</fullName>
    </alternativeName>
    <alternativeName>
        <fullName>GRB2-associated-binding protein 2-like</fullName>
    </alternativeName>
    <alternativeName>
        <fullName>Growth factor receptor bound protein 2-associated protein 4</fullName>
    </alternativeName>
</protein>
<feature type="chain" id="PRO_0000271192" description="GRB2-associated-binding protein 4">
    <location>
        <begin position="1"/>
        <end position="574"/>
    </location>
</feature>
<feature type="domain" description="PH" evidence="1">
    <location>
        <begin position="39"/>
        <end position="152"/>
    </location>
</feature>
<feature type="region of interest" description="Disordered" evidence="2">
    <location>
        <begin position="1"/>
        <end position="33"/>
    </location>
</feature>
<feature type="region of interest" description="Disordered" evidence="2">
    <location>
        <begin position="176"/>
        <end position="200"/>
    </location>
</feature>
<feature type="region of interest" description="Disordered" evidence="2">
    <location>
        <begin position="215"/>
        <end position="234"/>
    </location>
</feature>
<feature type="region of interest" description="Disordered" evidence="2">
    <location>
        <begin position="293"/>
        <end position="331"/>
    </location>
</feature>
<feature type="region of interest" description="Disordered" evidence="2">
    <location>
        <begin position="418"/>
        <end position="513"/>
    </location>
</feature>
<feature type="compositionally biased region" description="Polar residues" evidence="2">
    <location>
        <begin position="181"/>
        <end position="193"/>
    </location>
</feature>
<feature type="compositionally biased region" description="Polar residues" evidence="2">
    <location>
        <begin position="302"/>
        <end position="318"/>
    </location>
</feature>
<feature type="compositionally biased region" description="Polar residues" evidence="2">
    <location>
        <begin position="424"/>
        <end position="442"/>
    </location>
</feature>
<feature type="compositionally biased region" description="Low complexity" evidence="2">
    <location>
        <begin position="457"/>
        <end position="478"/>
    </location>
</feature>
<feature type="compositionally biased region" description="Polar residues" evidence="2">
    <location>
        <begin position="502"/>
        <end position="513"/>
    </location>
</feature>
<feature type="sequence variant" id="VAR_053098" description="In dbSNP:rs11703655.">
    <original>L</original>
    <variation>P</variation>
    <location>
        <position position="273"/>
    </location>
</feature>
<comment type="similarity">
    <text evidence="3">Belongs to the GAB family.</text>
</comment>
<reference key="1">
    <citation type="submission" date="2001-12" db="EMBL/GenBank/DDBJ databases">
        <title>Identification and cDNA cloning of Grb2 associated binder 2 (GAB2)-like.</title>
        <authorList>
            <person name="Shimizu N."/>
            <person name="Minoshima S."/>
            <person name="Sasaki T."/>
            <person name="Hosono K."/>
        </authorList>
    </citation>
    <scope>NUCLEOTIDE SEQUENCE [MRNA]</scope>
</reference>
<accession>Q2WGN9</accession>
<evidence type="ECO:0000255" key="1">
    <source>
        <dbReference type="PROSITE-ProRule" id="PRU00145"/>
    </source>
</evidence>
<evidence type="ECO:0000256" key="2">
    <source>
        <dbReference type="SAM" id="MobiDB-lite"/>
    </source>
</evidence>
<evidence type="ECO:0000305" key="3"/>
<sequence>MSLPSPSPSRELCPPDPAFAPLSSWPGSGPAGGSTRSGHVLYSGWLRKSPPEKKLRLFAWRKRWFILRRGQTSSDPDVLEYYKNDGSKKPLRTINLNLCEQLDVDVTLNFNKKEIQKGYMFDIKTSERTFYLVAETREDMNEWVQSICQICGFRQEESTGFLGNISSASHGLCSSPAEPSCSHQHLPQEQEPTSEPPVSHCVPPTWPIPAPPGCLRSHQHASQRAEHARSASFSQGSEAPFIMRRNTAMQNLAQHSGYSVDGVSGHIHGFHSLSKPSQHNAEFRGSTHRIPWSLASHGHTRGSLTGSEADNEASSGKYTQHGGGNASRPAESMHEGVCSFLPGRTLVGLSDSIASEGSCVPMNPGSPTLPAVKQAGDDSQGVCIPVGSCLVRFDLLGSPLTELSMHQDLSQGHEVQLPPVNRSLKPNQKANPTPPNLRNNRVINELSFKPPVTEPWSGTSHTFDSSSSQHPISTQSITNTDSEDSGERYLFPNPASAFPVSGGTSSSAPPRSTGNIHYAALDFQPSKPSIGSVTSGKKVDYVQVDLEKTQALQKTMHEQMCLRQSSEPPRGAKL</sequence>